<proteinExistence type="evidence at protein level"/>
<reference key="1">
    <citation type="journal article" date="2005" name="Science">
        <title>The transcriptional landscape of the mammalian genome.</title>
        <authorList>
            <person name="Carninci P."/>
            <person name="Kasukawa T."/>
            <person name="Katayama S."/>
            <person name="Gough J."/>
            <person name="Frith M.C."/>
            <person name="Maeda N."/>
            <person name="Oyama R."/>
            <person name="Ravasi T."/>
            <person name="Lenhard B."/>
            <person name="Wells C."/>
            <person name="Kodzius R."/>
            <person name="Shimokawa K."/>
            <person name="Bajic V.B."/>
            <person name="Brenner S.E."/>
            <person name="Batalov S."/>
            <person name="Forrest A.R."/>
            <person name="Zavolan M."/>
            <person name="Davis M.J."/>
            <person name="Wilming L.G."/>
            <person name="Aidinis V."/>
            <person name="Allen J.E."/>
            <person name="Ambesi-Impiombato A."/>
            <person name="Apweiler R."/>
            <person name="Aturaliya R.N."/>
            <person name="Bailey T.L."/>
            <person name="Bansal M."/>
            <person name="Baxter L."/>
            <person name="Beisel K.W."/>
            <person name="Bersano T."/>
            <person name="Bono H."/>
            <person name="Chalk A.M."/>
            <person name="Chiu K.P."/>
            <person name="Choudhary V."/>
            <person name="Christoffels A."/>
            <person name="Clutterbuck D.R."/>
            <person name="Crowe M.L."/>
            <person name="Dalla E."/>
            <person name="Dalrymple B.P."/>
            <person name="de Bono B."/>
            <person name="Della Gatta G."/>
            <person name="di Bernardo D."/>
            <person name="Down T."/>
            <person name="Engstrom P."/>
            <person name="Fagiolini M."/>
            <person name="Faulkner G."/>
            <person name="Fletcher C.F."/>
            <person name="Fukushima T."/>
            <person name="Furuno M."/>
            <person name="Futaki S."/>
            <person name="Gariboldi M."/>
            <person name="Georgii-Hemming P."/>
            <person name="Gingeras T.R."/>
            <person name="Gojobori T."/>
            <person name="Green R.E."/>
            <person name="Gustincich S."/>
            <person name="Harbers M."/>
            <person name="Hayashi Y."/>
            <person name="Hensch T.K."/>
            <person name="Hirokawa N."/>
            <person name="Hill D."/>
            <person name="Huminiecki L."/>
            <person name="Iacono M."/>
            <person name="Ikeo K."/>
            <person name="Iwama A."/>
            <person name="Ishikawa T."/>
            <person name="Jakt M."/>
            <person name="Kanapin A."/>
            <person name="Katoh M."/>
            <person name="Kawasawa Y."/>
            <person name="Kelso J."/>
            <person name="Kitamura H."/>
            <person name="Kitano H."/>
            <person name="Kollias G."/>
            <person name="Krishnan S.P."/>
            <person name="Kruger A."/>
            <person name="Kummerfeld S.K."/>
            <person name="Kurochkin I.V."/>
            <person name="Lareau L.F."/>
            <person name="Lazarevic D."/>
            <person name="Lipovich L."/>
            <person name="Liu J."/>
            <person name="Liuni S."/>
            <person name="McWilliam S."/>
            <person name="Madan Babu M."/>
            <person name="Madera M."/>
            <person name="Marchionni L."/>
            <person name="Matsuda H."/>
            <person name="Matsuzawa S."/>
            <person name="Miki H."/>
            <person name="Mignone F."/>
            <person name="Miyake S."/>
            <person name="Morris K."/>
            <person name="Mottagui-Tabar S."/>
            <person name="Mulder N."/>
            <person name="Nakano N."/>
            <person name="Nakauchi H."/>
            <person name="Ng P."/>
            <person name="Nilsson R."/>
            <person name="Nishiguchi S."/>
            <person name="Nishikawa S."/>
            <person name="Nori F."/>
            <person name="Ohara O."/>
            <person name="Okazaki Y."/>
            <person name="Orlando V."/>
            <person name="Pang K.C."/>
            <person name="Pavan W.J."/>
            <person name="Pavesi G."/>
            <person name="Pesole G."/>
            <person name="Petrovsky N."/>
            <person name="Piazza S."/>
            <person name="Reed J."/>
            <person name="Reid J.F."/>
            <person name="Ring B.Z."/>
            <person name="Ringwald M."/>
            <person name="Rost B."/>
            <person name="Ruan Y."/>
            <person name="Salzberg S.L."/>
            <person name="Sandelin A."/>
            <person name="Schneider C."/>
            <person name="Schoenbach C."/>
            <person name="Sekiguchi K."/>
            <person name="Semple C.A."/>
            <person name="Seno S."/>
            <person name="Sessa L."/>
            <person name="Sheng Y."/>
            <person name="Shibata Y."/>
            <person name="Shimada H."/>
            <person name="Shimada K."/>
            <person name="Silva D."/>
            <person name="Sinclair B."/>
            <person name="Sperling S."/>
            <person name="Stupka E."/>
            <person name="Sugiura K."/>
            <person name="Sultana R."/>
            <person name="Takenaka Y."/>
            <person name="Taki K."/>
            <person name="Tammoja K."/>
            <person name="Tan S.L."/>
            <person name="Tang S."/>
            <person name="Taylor M.S."/>
            <person name="Tegner J."/>
            <person name="Teichmann S.A."/>
            <person name="Ueda H.R."/>
            <person name="van Nimwegen E."/>
            <person name="Verardo R."/>
            <person name="Wei C.L."/>
            <person name="Yagi K."/>
            <person name="Yamanishi H."/>
            <person name="Zabarovsky E."/>
            <person name="Zhu S."/>
            <person name="Zimmer A."/>
            <person name="Hide W."/>
            <person name="Bult C."/>
            <person name="Grimmond S.M."/>
            <person name="Teasdale R.D."/>
            <person name="Liu E.T."/>
            <person name="Brusic V."/>
            <person name="Quackenbush J."/>
            <person name="Wahlestedt C."/>
            <person name="Mattick J.S."/>
            <person name="Hume D.A."/>
            <person name="Kai C."/>
            <person name="Sasaki D."/>
            <person name="Tomaru Y."/>
            <person name="Fukuda S."/>
            <person name="Kanamori-Katayama M."/>
            <person name="Suzuki M."/>
            <person name="Aoki J."/>
            <person name="Arakawa T."/>
            <person name="Iida J."/>
            <person name="Imamura K."/>
            <person name="Itoh M."/>
            <person name="Kato T."/>
            <person name="Kawaji H."/>
            <person name="Kawagashira N."/>
            <person name="Kawashima T."/>
            <person name="Kojima M."/>
            <person name="Kondo S."/>
            <person name="Konno H."/>
            <person name="Nakano K."/>
            <person name="Ninomiya N."/>
            <person name="Nishio T."/>
            <person name="Okada M."/>
            <person name="Plessy C."/>
            <person name="Shibata K."/>
            <person name="Shiraki T."/>
            <person name="Suzuki S."/>
            <person name="Tagami M."/>
            <person name="Waki K."/>
            <person name="Watahiki A."/>
            <person name="Okamura-Oho Y."/>
            <person name="Suzuki H."/>
            <person name="Kawai J."/>
            <person name="Hayashizaki Y."/>
        </authorList>
    </citation>
    <scope>NUCLEOTIDE SEQUENCE [LARGE SCALE MRNA]</scope>
    <source>
        <strain>C57BL/6J</strain>
        <tissue>Colon</tissue>
        <tissue>Thymus</tissue>
    </source>
</reference>
<reference key="2">
    <citation type="journal article" date="2004" name="Genome Res.">
        <title>The status, quality, and expansion of the NIH full-length cDNA project: the Mammalian Gene Collection (MGC).</title>
        <authorList>
            <consortium name="The MGC Project Team"/>
        </authorList>
    </citation>
    <scope>NUCLEOTIDE SEQUENCE [LARGE SCALE MRNA]</scope>
    <source>
        <tissue>Retina</tissue>
    </source>
</reference>
<reference key="3">
    <citation type="journal article" date="2010" name="Cell">
        <title>A tissue-specific atlas of mouse protein phosphorylation and expression.</title>
        <authorList>
            <person name="Huttlin E.L."/>
            <person name="Jedrychowski M.P."/>
            <person name="Elias J.E."/>
            <person name="Goswami T."/>
            <person name="Rad R."/>
            <person name="Beausoleil S.A."/>
            <person name="Villen J."/>
            <person name="Haas W."/>
            <person name="Sowa M.E."/>
            <person name="Gygi S.P."/>
        </authorList>
    </citation>
    <scope>IDENTIFICATION BY MASS SPECTROMETRY [LARGE SCALE ANALYSIS]</scope>
    <source>
        <tissue>Brain</tissue>
        <tissue>Brown adipose tissue</tissue>
        <tissue>Heart</tissue>
        <tissue>Kidney</tissue>
        <tissue>Liver</tissue>
        <tissue>Spleen</tissue>
    </source>
</reference>
<evidence type="ECO:0000250" key="1">
    <source>
        <dbReference type="UniProtKB" id="P49406"/>
    </source>
</evidence>
<evidence type="ECO:0000255" key="2"/>
<evidence type="ECO:0000256" key="3">
    <source>
        <dbReference type="SAM" id="MobiDB-lite"/>
    </source>
</evidence>
<evidence type="ECO:0000305" key="4"/>
<comment type="subunit">
    <text evidence="1">Component of the mitochondrial ribosome large subunit (39S) which comprises a 16S rRNA and about 50 distinct proteins.</text>
</comment>
<comment type="subcellular location">
    <subcellularLocation>
        <location evidence="1">Mitochondrion</location>
    </subcellularLocation>
</comment>
<comment type="similarity">
    <text evidence="4">Belongs to the bacterial ribosomal protein bL19 family.</text>
</comment>
<organism>
    <name type="scientific">Mus musculus</name>
    <name type="common">Mouse</name>
    <dbReference type="NCBI Taxonomy" id="10090"/>
    <lineage>
        <taxon>Eukaryota</taxon>
        <taxon>Metazoa</taxon>
        <taxon>Chordata</taxon>
        <taxon>Craniata</taxon>
        <taxon>Vertebrata</taxon>
        <taxon>Euteleostomi</taxon>
        <taxon>Mammalia</taxon>
        <taxon>Eutheria</taxon>
        <taxon>Euarchontoglires</taxon>
        <taxon>Glires</taxon>
        <taxon>Rodentia</taxon>
        <taxon>Myomorpha</taxon>
        <taxon>Muroidea</taxon>
        <taxon>Muridae</taxon>
        <taxon>Murinae</taxon>
        <taxon>Mus</taxon>
        <taxon>Mus</taxon>
    </lineage>
</organism>
<dbReference type="EMBL" id="AK018508">
    <property type="protein sequence ID" value="BAB31245.1"/>
    <property type="molecule type" value="mRNA"/>
</dbReference>
<dbReference type="EMBL" id="AK050637">
    <property type="protein sequence ID" value="BAC34357.1"/>
    <property type="molecule type" value="mRNA"/>
</dbReference>
<dbReference type="EMBL" id="BC020315">
    <property type="protein sequence ID" value="AAH20315.1"/>
    <property type="molecule type" value="mRNA"/>
</dbReference>
<dbReference type="EMBL" id="BC043921">
    <property type="protein sequence ID" value="AAH43921.1"/>
    <property type="molecule type" value="mRNA"/>
</dbReference>
<dbReference type="CCDS" id="CCDS39523.1"/>
<dbReference type="RefSeq" id="NP_080766.1">
    <property type="nucleotide sequence ID" value="NM_026490.2"/>
</dbReference>
<dbReference type="SMR" id="Q9D338"/>
<dbReference type="BioGRID" id="207876">
    <property type="interactions" value="33"/>
</dbReference>
<dbReference type="ComplexPortal" id="CPX-5302">
    <property type="entry name" value="39S mitochondrial large ribosomal subunit"/>
</dbReference>
<dbReference type="FunCoup" id="Q9D338">
    <property type="interactions" value="3279"/>
</dbReference>
<dbReference type="STRING" id="10090.ENSMUSP00000032124"/>
<dbReference type="iPTMnet" id="Q9D338"/>
<dbReference type="PhosphoSitePlus" id="Q9D338"/>
<dbReference type="SwissPalm" id="Q9D338"/>
<dbReference type="jPOST" id="Q9D338"/>
<dbReference type="PaxDb" id="10090-ENSMUSP00000032124"/>
<dbReference type="PeptideAtlas" id="Q9D338"/>
<dbReference type="ProteomicsDB" id="299858"/>
<dbReference type="Pumba" id="Q9D338"/>
<dbReference type="Antibodypedia" id="31651">
    <property type="antibodies" value="173 antibodies from 23 providers"/>
</dbReference>
<dbReference type="DNASU" id="56284"/>
<dbReference type="Ensembl" id="ENSMUST00000032124.9">
    <property type="protein sequence ID" value="ENSMUSP00000032124.9"/>
    <property type="gene ID" value="ENSMUSG00000030045.11"/>
</dbReference>
<dbReference type="GeneID" id="56284"/>
<dbReference type="KEGG" id="mmu:56284"/>
<dbReference type="UCSC" id="uc009clf.2">
    <property type="organism name" value="mouse"/>
</dbReference>
<dbReference type="AGR" id="MGI:1926274"/>
<dbReference type="CTD" id="9801"/>
<dbReference type="MGI" id="MGI:1926274">
    <property type="gene designation" value="Mrpl19"/>
</dbReference>
<dbReference type="VEuPathDB" id="HostDB:ENSMUSG00000030045"/>
<dbReference type="eggNOG" id="KOG1698">
    <property type="taxonomic scope" value="Eukaryota"/>
</dbReference>
<dbReference type="GeneTree" id="ENSGT00390000009415"/>
<dbReference type="HOGENOM" id="CLU_076988_1_0_1"/>
<dbReference type="InParanoid" id="Q9D338"/>
<dbReference type="OMA" id="IHEIQVV"/>
<dbReference type="OrthoDB" id="432645at2759"/>
<dbReference type="PhylomeDB" id="Q9D338"/>
<dbReference type="TreeFam" id="TF320270"/>
<dbReference type="Reactome" id="R-MMU-5389840">
    <property type="pathway name" value="Mitochondrial translation elongation"/>
</dbReference>
<dbReference type="Reactome" id="R-MMU-5419276">
    <property type="pathway name" value="Mitochondrial translation termination"/>
</dbReference>
<dbReference type="BioGRID-ORCS" id="56284">
    <property type="hits" value="19 hits in 113 CRISPR screens"/>
</dbReference>
<dbReference type="ChiTaRS" id="Mrpl19">
    <property type="organism name" value="mouse"/>
</dbReference>
<dbReference type="PRO" id="PR:Q9D338"/>
<dbReference type="Proteomes" id="UP000000589">
    <property type="component" value="Chromosome 6"/>
</dbReference>
<dbReference type="RNAct" id="Q9D338">
    <property type="molecule type" value="protein"/>
</dbReference>
<dbReference type="Bgee" id="ENSMUSG00000030045">
    <property type="expression patterns" value="Expressed in metanephric loop of Henle and 240 other cell types or tissues"/>
</dbReference>
<dbReference type="GO" id="GO:0005743">
    <property type="term" value="C:mitochondrial inner membrane"/>
    <property type="evidence" value="ECO:0000303"/>
    <property type="project" value="ComplexPortal"/>
</dbReference>
<dbReference type="GO" id="GO:0005762">
    <property type="term" value="C:mitochondrial large ribosomal subunit"/>
    <property type="evidence" value="ECO:0000250"/>
    <property type="project" value="UniProtKB"/>
</dbReference>
<dbReference type="GO" id="GO:0005761">
    <property type="term" value="C:mitochondrial ribosome"/>
    <property type="evidence" value="ECO:0000250"/>
    <property type="project" value="MGI"/>
</dbReference>
<dbReference type="GO" id="GO:0005739">
    <property type="term" value="C:mitochondrion"/>
    <property type="evidence" value="ECO:0007005"/>
    <property type="project" value="MGI"/>
</dbReference>
<dbReference type="GO" id="GO:0005634">
    <property type="term" value="C:nucleus"/>
    <property type="evidence" value="ECO:0007669"/>
    <property type="project" value="Ensembl"/>
</dbReference>
<dbReference type="GO" id="GO:0003735">
    <property type="term" value="F:structural constituent of ribosome"/>
    <property type="evidence" value="ECO:0007669"/>
    <property type="project" value="InterPro"/>
</dbReference>
<dbReference type="GO" id="GO:0032543">
    <property type="term" value="P:mitochondrial translation"/>
    <property type="evidence" value="ECO:0000303"/>
    <property type="project" value="ComplexPortal"/>
</dbReference>
<dbReference type="FunFam" id="2.30.30.790:FF:000002">
    <property type="entry name" value="39S ribosomal protein L19, mitochondrial"/>
    <property type="match status" value="1"/>
</dbReference>
<dbReference type="Gene3D" id="2.30.30.790">
    <property type="match status" value="1"/>
</dbReference>
<dbReference type="InterPro" id="IPR001857">
    <property type="entry name" value="Ribosomal_bL19"/>
</dbReference>
<dbReference type="InterPro" id="IPR038657">
    <property type="entry name" value="Ribosomal_bL19_sf"/>
</dbReference>
<dbReference type="InterPro" id="IPR008991">
    <property type="entry name" value="Translation_prot_SH3-like_sf"/>
</dbReference>
<dbReference type="PANTHER" id="PTHR15680:SF9">
    <property type="entry name" value="LARGE RIBOSOMAL SUBUNIT PROTEIN BL19M"/>
    <property type="match status" value="1"/>
</dbReference>
<dbReference type="PANTHER" id="PTHR15680">
    <property type="entry name" value="RIBOSOMAL PROTEIN L19"/>
    <property type="match status" value="1"/>
</dbReference>
<dbReference type="Pfam" id="PF01245">
    <property type="entry name" value="Ribosomal_L19"/>
    <property type="match status" value="1"/>
</dbReference>
<dbReference type="PRINTS" id="PR00061">
    <property type="entry name" value="RIBOSOMALL19"/>
</dbReference>
<dbReference type="SUPFAM" id="SSF50104">
    <property type="entry name" value="Translation proteins SH3-like domain"/>
    <property type="match status" value="1"/>
</dbReference>
<name>RM19_MOUSE</name>
<protein>
    <recommendedName>
        <fullName evidence="4">Large ribosomal subunit protein bL19m</fullName>
    </recommendedName>
    <alternativeName>
        <fullName>39S ribosomal protein L19, mitochondrial</fullName>
        <shortName>L19mt</shortName>
        <shortName>MRP-L19</shortName>
    </alternativeName>
</protein>
<gene>
    <name type="primary">Mrpl19</name>
</gene>
<feature type="transit peptide" description="Mitochondrion" evidence="2">
    <location>
        <begin position="1"/>
        <end status="unknown"/>
    </location>
</feature>
<feature type="chain" id="PRO_0000030474" description="Large ribosomal subunit protein bL19m">
    <location>
        <begin status="unknown"/>
        <end position="292"/>
    </location>
</feature>
<feature type="region of interest" description="Disordered" evidence="3">
    <location>
        <begin position="41"/>
        <end position="60"/>
    </location>
</feature>
<feature type="modified residue" description="Phosphoserine" evidence="1">
    <location>
        <position position="77"/>
    </location>
</feature>
<keyword id="KW-0496">Mitochondrion</keyword>
<keyword id="KW-0597">Phosphoprotein</keyword>
<keyword id="KW-1185">Reference proteome</keyword>
<keyword id="KW-0687">Ribonucleoprotein</keyword>
<keyword id="KW-0689">Ribosomal protein</keyword>
<keyword id="KW-0809">Transit peptide</keyword>
<accession>Q9D338</accession>
<accession>Q543I0</accession>
<accession>Q8R1R0</accession>
<sequence length="292" mass="33578">MAASMAESCRASLYLARSVRMARPRLAAFASDACRVCTGPSRFQSTGPSEPGGFKPPPKPVIVDRRRVPEDERRFLSPEFIPPRGRTNPLKFKIERKDMLDRRKVLPIPEFYVGSILRVTTADPYASGKTSQFLGICIKRSGNGLGATFTLRNTIEGQGVEICFELYNPRIQEIQVVKLEKRLDDNLLYLRDALPEYSTFDVNMKPVPQEACQEVPVNKLKVKMKPKPWSKRWERPNFNIKGIRFDLALTEEQMKEAQKWNKPWIEFDMMREYDTSKIEAALWEEIEASKKS</sequence>